<dbReference type="EMBL" id="CM000159">
    <property type="protein sequence ID" value="EDW93083.1"/>
    <property type="molecule type" value="Genomic_DNA"/>
</dbReference>
<dbReference type="EMBL" id="AY231956">
    <property type="protein sequence ID" value="AAR09979.1"/>
    <property type="molecule type" value="mRNA"/>
</dbReference>
<dbReference type="SMR" id="P60320"/>
<dbReference type="EnsemblMetazoa" id="FBtr0267785">
    <property type="protein sequence ID" value="FBpp0266277"/>
    <property type="gene ID" value="FBgn0067927"/>
</dbReference>
<dbReference type="EnsemblMetazoa" id="XM_002093335.4">
    <property type="protein sequence ID" value="XP_002093371.1"/>
    <property type="gene ID" value="LOC6532627"/>
</dbReference>
<dbReference type="GeneID" id="6532627"/>
<dbReference type="KEGG" id="dya:Dyak_GE21267"/>
<dbReference type="CTD" id="39034"/>
<dbReference type="eggNOG" id="KOG3791">
    <property type="taxonomic scope" value="Eukaryota"/>
</dbReference>
<dbReference type="HOGENOM" id="CLU_003304_0_0_1"/>
<dbReference type="OMA" id="HHSQHAQ"/>
<dbReference type="OrthoDB" id="2155283at2759"/>
<dbReference type="PhylomeDB" id="P60320"/>
<dbReference type="ChiTaRS" id="smg">
    <property type="organism name" value="fly"/>
</dbReference>
<dbReference type="Proteomes" id="UP000002282">
    <property type="component" value="Chromosome 3L"/>
</dbReference>
<dbReference type="GO" id="GO:0005737">
    <property type="term" value="C:cytoplasm"/>
    <property type="evidence" value="ECO:0000250"/>
    <property type="project" value="UniProtKB"/>
</dbReference>
<dbReference type="GO" id="GO:0000932">
    <property type="term" value="C:P-body"/>
    <property type="evidence" value="ECO:0007669"/>
    <property type="project" value="TreeGrafter"/>
</dbReference>
<dbReference type="GO" id="GO:0003729">
    <property type="term" value="F:mRNA binding"/>
    <property type="evidence" value="ECO:0007669"/>
    <property type="project" value="TreeGrafter"/>
</dbReference>
<dbReference type="GO" id="GO:0030371">
    <property type="term" value="F:translation repressor activity"/>
    <property type="evidence" value="ECO:0000250"/>
    <property type="project" value="UniProtKB"/>
</dbReference>
<dbReference type="GO" id="GO:0017148">
    <property type="term" value="P:negative regulation of translation"/>
    <property type="evidence" value="ECO:0000250"/>
    <property type="project" value="UniProtKB"/>
</dbReference>
<dbReference type="GO" id="GO:0000289">
    <property type="term" value="P:nuclear-transcribed mRNA poly(A) tail shortening"/>
    <property type="evidence" value="ECO:0007669"/>
    <property type="project" value="TreeGrafter"/>
</dbReference>
<dbReference type="GO" id="GO:0006355">
    <property type="term" value="P:regulation of DNA-templated transcription"/>
    <property type="evidence" value="ECO:0007669"/>
    <property type="project" value="InterPro"/>
</dbReference>
<dbReference type="CDD" id="cd09557">
    <property type="entry name" value="SAM_Smaug"/>
    <property type="match status" value="1"/>
</dbReference>
<dbReference type="FunFam" id="1.10.150.50:FF:000076">
    <property type="entry name" value="Smg, isoform B"/>
    <property type="match status" value="1"/>
</dbReference>
<dbReference type="FunFam" id="1.25.40.170:FF:000005">
    <property type="entry name" value="Smg, isoform B"/>
    <property type="match status" value="1"/>
</dbReference>
<dbReference type="Gene3D" id="1.25.40.170">
    <property type="entry name" value="Smaug, PHAT domain"/>
    <property type="match status" value="1"/>
</dbReference>
<dbReference type="Gene3D" id="1.10.150.50">
    <property type="entry name" value="Transcription Factor, Ets-1"/>
    <property type="match status" value="1"/>
</dbReference>
<dbReference type="InterPro" id="IPR016024">
    <property type="entry name" value="ARM-type_fold"/>
</dbReference>
<dbReference type="InterPro" id="IPR015327">
    <property type="entry name" value="PHAT_dom"/>
</dbReference>
<dbReference type="InterPro" id="IPR037093">
    <property type="entry name" value="PHAT_dom_sf"/>
</dbReference>
<dbReference type="InterPro" id="IPR001660">
    <property type="entry name" value="SAM"/>
</dbReference>
<dbReference type="InterPro" id="IPR013761">
    <property type="entry name" value="SAM/pointed_sf"/>
</dbReference>
<dbReference type="InterPro" id="IPR050897">
    <property type="entry name" value="SMAUG/VTS1_RNA-bind"/>
</dbReference>
<dbReference type="InterPro" id="IPR037634">
    <property type="entry name" value="Smaug_SAM"/>
</dbReference>
<dbReference type="PANTHER" id="PTHR12515:SF5">
    <property type="entry name" value="PROTEIN SMAUG"/>
    <property type="match status" value="1"/>
</dbReference>
<dbReference type="PANTHER" id="PTHR12515">
    <property type="entry name" value="STERILE ALPHA MOTIF DOMAIN CONTAINING PROTEIN 4-RELATED"/>
    <property type="match status" value="1"/>
</dbReference>
<dbReference type="Pfam" id="PF09246">
    <property type="entry name" value="PHAT"/>
    <property type="match status" value="1"/>
</dbReference>
<dbReference type="Pfam" id="PF00536">
    <property type="entry name" value="SAM_1"/>
    <property type="match status" value="1"/>
</dbReference>
<dbReference type="SMART" id="SM00454">
    <property type="entry name" value="SAM"/>
    <property type="match status" value="1"/>
</dbReference>
<dbReference type="SUPFAM" id="SSF48371">
    <property type="entry name" value="ARM repeat"/>
    <property type="match status" value="1"/>
</dbReference>
<dbReference type="SUPFAM" id="SSF47769">
    <property type="entry name" value="SAM/Pointed domain"/>
    <property type="match status" value="1"/>
</dbReference>
<evidence type="ECO:0000250" key="1"/>
<evidence type="ECO:0000256" key="2">
    <source>
        <dbReference type="SAM" id="MobiDB-lite"/>
    </source>
</evidence>
<evidence type="ECO:0000305" key="3"/>
<name>SMG_DROYA</name>
<feature type="chain" id="PRO_0000071973" description="Protein Smaug">
    <location>
        <begin position="1"/>
        <end position="999"/>
    </location>
</feature>
<feature type="domain" description="SAM">
    <location>
        <begin position="600"/>
        <end position="654"/>
    </location>
</feature>
<feature type="region of interest" description="Disordered" evidence="2">
    <location>
        <begin position="1"/>
        <end position="45"/>
    </location>
</feature>
<feature type="region of interest" description="Disordered" evidence="2">
    <location>
        <begin position="50"/>
        <end position="69"/>
    </location>
</feature>
<feature type="region of interest" description="Disordered" evidence="2">
    <location>
        <begin position="321"/>
        <end position="370"/>
    </location>
</feature>
<feature type="region of interest" description="Interaction with cup" evidence="1">
    <location>
        <begin position="583"/>
        <end position="763"/>
    </location>
</feature>
<feature type="region of interest" description="Disordered" evidence="2">
    <location>
        <begin position="773"/>
        <end position="892"/>
    </location>
</feature>
<feature type="compositionally biased region" description="Polar residues" evidence="2">
    <location>
        <begin position="1"/>
        <end position="37"/>
    </location>
</feature>
<feature type="compositionally biased region" description="Low complexity" evidence="2">
    <location>
        <begin position="321"/>
        <end position="338"/>
    </location>
</feature>
<feature type="compositionally biased region" description="Polar residues" evidence="2">
    <location>
        <begin position="801"/>
        <end position="822"/>
    </location>
</feature>
<feature type="compositionally biased region" description="Polar residues" evidence="2">
    <location>
        <begin position="854"/>
        <end position="864"/>
    </location>
</feature>
<feature type="modified residue" description="Phosphoserine" evidence="1">
    <location>
        <position position="564"/>
    </location>
</feature>
<feature type="modified residue" description="Phosphoserine" evidence="1">
    <location>
        <position position="575"/>
    </location>
</feature>
<feature type="modified residue" description="Phosphoserine" evidence="1">
    <location>
        <position position="972"/>
    </location>
</feature>
<feature type="sequence conflict" description="In Ref. 2; AAR09979." evidence="3" ref="2">
    <original>Q</original>
    <variation>H</variation>
    <location>
        <position position="905"/>
    </location>
</feature>
<proteinExistence type="evidence at transcript level"/>
<keyword id="KW-0963">Cytoplasm</keyword>
<keyword id="KW-0217">Developmental protein</keyword>
<keyword id="KW-0597">Phosphoprotein</keyword>
<keyword id="KW-0678">Repressor</keyword>
<keyword id="KW-0694">RNA-binding</keyword>
<keyword id="KW-0810">Translation regulation</keyword>
<comment type="function">
    <text evidence="1">Translation regulator that binds to the 3'-UTR of specific mRNAs such as nanos (nos) and prevent their translation. Prevents translation of unlocalized nos in the bulk cytoplasm via the recruitment of cup (By similarity).</text>
</comment>
<comment type="subunit">
    <text evidence="1">Interacts with oskar (osk). Binds to the 3'-UTR of nos. Interacts with cup, which in turn recruits eIF4-E, leading to an indirect interaction between smg and eIF4-E that prevents mRNA translation (By similarity).</text>
</comment>
<comment type="subcellular location">
    <subcellularLocation>
        <location evidence="1">Cytoplasm</location>
    </subcellularLocation>
</comment>
<comment type="domain">
    <text>The SAM domain mediates the association with the 3'-UTR of specific mRNAs.</text>
</comment>
<comment type="similarity">
    <text evidence="3">Belongs to the SMAUG family.</text>
</comment>
<organism>
    <name type="scientific">Drosophila yakuba</name>
    <name type="common">Fruit fly</name>
    <dbReference type="NCBI Taxonomy" id="7245"/>
    <lineage>
        <taxon>Eukaryota</taxon>
        <taxon>Metazoa</taxon>
        <taxon>Ecdysozoa</taxon>
        <taxon>Arthropoda</taxon>
        <taxon>Hexapoda</taxon>
        <taxon>Insecta</taxon>
        <taxon>Pterygota</taxon>
        <taxon>Neoptera</taxon>
        <taxon>Endopterygota</taxon>
        <taxon>Diptera</taxon>
        <taxon>Brachycera</taxon>
        <taxon>Muscomorpha</taxon>
        <taxon>Ephydroidea</taxon>
        <taxon>Drosophilidae</taxon>
        <taxon>Drosophila</taxon>
        <taxon>Sophophora</taxon>
    </lineage>
</organism>
<gene>
    <name type="primary">smg</name>
    <name type="ORF">GE21267</name>
</gene>
<sequence>MKYATGTDNAMTSGISGQTNNSNSVSNEMQPTTSTPTAVHKEATSTATTTATYANGNPNSNANPSQSQPSNALFCEQVTTVTNLFEKWNDCERTVVMYALLKRLRYPSLKFLQYSIDSNLTQNLGTSQTNLSSVVIDINANNPVYLQNLLNAYKTFQPCDLLDAMSSSSSDKDSMPCYGSDFQITTSAQCDERKLYARKEDILHEVLNMLPLLKPGNDEAKLIYLTLIPVAVKDTMQQIVPTELVQQIFSYLLIHPAITSEDRRSLNIWLRHLEDHIQAAAAGLTNRSYFLQPSPQLVAGGSSTGSGSCSSSATSSSTASCSSVASSSMCPASGSRSSRTNDWQTIAPPSKQLQNKLAGDWRGSGGGSSSGSINPLCDNLNGITLNELASSQNSLGLSLEGSSSLVNGVVAGAGSMLGIGGGDDHDTSFSKNGTEILDFDPVTADMGEACSLASSSLCGRSGGNPVEDRSQPPPNLQQQLLQPPPYASILMGNVGDQFGEINRWSLDSKIAALKTRRSNSLTTQTISSCSSSSNSSVITVNDNCSNSTENLAQFANKPRSFSLSIEHQRGALINSGSDTRLDEFKPNYIKFHTRNVGMSGIGLWLKSLRLHKYIELFKNMTYEEMLLITEDFLQSVGVTKGASHKLALCIDKLKERANILNRVEQDLLTGQMELSTAVEELTNIVLTPMKPLESPGPPEENIGLRFLKVIDIVTNTLQQDPYAAQDDETLGVLMWILDRSIHNEAFMNHASQLKDLKFKLSKMKISMVPKMHHVKPAGVGPNNGNINKPRWNGKTRKCDTKNGSNDRINNRKNSNDMLNFSLNCLPHPLPHHSQQPPPPLPQFDYNGYGGGPSHQPQYKSSSYPSFMGNPQQQPPPPPPSKAHHHAQQMQQMLQQHNHFPALPQQTPPQSHRRSLNNLILVTGGPQQPQQMIFKPGQGVLTNNGSNDNLGLERNQQPQQQQQQRKLSGGVSSVEQQPKKTMAAVVMENLAKFDQHFTLF</sequence>
<reference key="1">
    <citation type="journal article" date="2007" name="Nature">
        <title>Evolution of genes and genomes on the Drosophila phylogeny.</title>
        <authorList>
            <consortium name="Drosophila 12 genomes consortium"/>
        </authorList>
    </citation>
    <scope>NUCLEOTIDE SEQUENCE [LARGE SCALE GENOMIC DNA]</scope>
    <source>
        <strain>Tai18E2 / Tucson 14021-0261.01</strain>
    </source>
</reference>
<reference key="2">
    <citation type="journal article" date="2003" name="Genome Res.">
        <title>An evolutionary analysis of orphan genes in Drosophila.</title>
        <authorList>
            <person name="Domazet-Loso T."/>
            <person name="Tautz D."/>
        </authorList>
    </citation>
    <scope>NUCLEOTIDE SEQUENCE [MRNA] OF 861-986</scope>
</reference>
<accession>P60320</accession>
<accession>B4PFF7</accession>
<protein>
    <recommendedName>
        <fullName>Protein Smaug</fullName>
    </recommendedName>
</protein>